<keyword id="KW-0687">Ribonucleoprotein</keyword>
<keyword id="KW-0689">Ribosomal protein</keyword>
<keyword id="KW-0694">RNA-binding</keyword>
<keyword id="KW-0699">rRNA-binding</keyword>
<accession>A2C6S6</accession>
<protein>
    <recommendedName>
        <fullName evidence="1">Small ribosomal subunit protein bS20</fullName>
    </recommendedName>
    <alternativeName>
        <fullName evidence="3">30S ribosomal protein S20</fullName>
    </alternativeName>
</protein>
<dbReference type="EMBL" id="CP000554">
    <property type="protein sequence ID" value="ABM77186.1"/>
    <property type="molecule type" value="Genomic_DNA"/>
</dbReference>
<dbReference type="RefSeq" id="WP_011825111.1">
    <property type="nucleotide sequence ID" value="NC_008820.1"/>
</dbReference>
<dbReference type="SMR" id="A2C6S6"/>
<dbReference type="STRING" id="59922.P9303_04341"/>
<dbReference type="KEGG" id="pmf:P9303_04341"/>
<dbReference type="HOGENOM" id="CLU_160655_5_0_3"/>
<dbReference type="BioCyc" id="PMAR59922:G1G80-403-MONOMER"/>
<dbReference type="Proteomes" id="UP000002274">
    <property type="component" value="Chromosome"/>
</dbReference>
<dbReference type="GO" id="GO:0005829">
    <property type="term" value="C:cytosol"/>
    <property type="evidence" value="ECO:0007669"/>
    <property type="project" value="TreeGrafter"/>
</dbReference>
<dbReference type="GO" id="GO:0015935">
    <property type="term" value="C:small ribosomal subunit"/>
    <property type="evidence" value="ECO:0007669"/>
    <property type="project" value="TreeGrafter"/>
</dbReference>
<dbReference type="GO" id="GO:0070181">
    <property type="term" value="F:small ribosomal subunit rRNA binding"/>
    <property type="evidence" value="ECO:0007669"/>
    <property type="project" value="TreeGrafter"/>
</dbReference>
<dbReference type="GO" id="GO:0003735">
    <property type="term" value="F:structural constituent of ribosome"/>
    <property type="evidence" value="ECO:0007669"/>
    <property type="project" value="InterPro"/>
</dbReference>
<dbReference type="GO" id="GO:0006412">
    <property type="term" value="P:translation"/>
    <property type="evidence" value="ECO:0007669"/>
    <property type="project" value="UniProtKB-UniRule"/>
</dbReference>
<dbReference type="FunFam" id="1.20.58.110:FF:000001">
    <property type="entry name" value="30S ribosomal protein S20"/>
    <property type="match status" value="1"/>
</dbReference>
<dbReference type="Gene3D" id="1.20.58.110">
    <property type="entry name" value="Ribosomal protein S20"/>
    <property type="match status" value="1"/>
</dbReference>
<dbReference type="HAMAP" id="MF_00500">
    <property type="entry name" value="Ribosomal_bS20"/>
    <property type="match status" value="1"/>
</dbReference>
<dbReference type="InterPro" id="IPR002583">
    <property type="entry name" value="Ribosomal_bS20"/>
</dbReference>
<dbReference type="InterPro" id="IPR036510">
    <property type="entry name" value="Ribosomal_bS20_sf"/>
</dbReference>
<dbReference type="NCBIfam" id="TIGR00029">
    <property type="entry name" value="S20"/>
    <property type="match status" value="1"/>
</dbReference>
<dbReference type="PANTHER" id="PTHR33398">
    <property type="entry name" value="30S RIBOSOMAL PROTEIN S20"/>
    <property type="match status" value="1"/>
</dbReference>
<dbReference type="PANTHER" id="PTHR33398:SF1">
    <property type="entry name" value="SMALL RIBOSOMAL SUBUNIT PROTEIN BS20C"/>
    <property type="match status" value="1"/>
</dbReference>
<dbReference type="Pfam" id="PF01649">
    <property type="entry name" value="Ribosomal_S20p"/>
    <property type="match status" value="1"/>
</dbReference>
<dbReference type="SUPFAM" id="SSF46992">
    <property type="entry name" value="Ribosomal protein S20"/>
    <property type="match status" value="1"/>
</dbReference>
<feature type="chain" id="PRO_1000014626" description="Small ribosomal subunit protein bS20">
    <location>
        <begin position="1"/>
        <end position="100"/>
    </location>
</feature>
<feature type="region of interest" description="Disordered" evidence="2">
    <location>
        <begin position="79"/>
        <end position="100"/>
    </location>
</feature>
<sequence>MANNKSSKKRVQIAERNRLENKSYKSAMRTLMKRCFSACSNYSQQPGETAKANVKASIDSAFSKIDKAVKRGVLHRNTAAHQKSRLSAAVKQAIEPAPST</sequence>
<evidence type="ECO:0000255" key="1">
    <source>
        <dbReference type="HAMAP-Rule" id="MF_00500"/>
    </source>
</evidence>
<evidence type="ECO:0000256" key="2">
    <source>
        <dbReference type="SAM" id="MobiDB-lite"/>
    </source>
</evidence>
<evidence type="ECO:0000305" key="3"/>
<organism>
    <name type="scientific">Prochlorococcus marinus (strain MIT 9303)</name>
    <dbReference type="NCBI Taxonomy" id="59922"/>
    <lineage>
        <taxon>Bacteria</taxon>
        <taxon>Bacillati</taxon>
        <taxon>Cyanobacteriota</taxon>
        <taxon>Cyanophyceae</taxon>
        <taxon>Synechococcales</taxon>
        <taxon>Prochlorococcaceae</taxon>
        <taxon>Prochlorococcus</taxon>
    </lineage>
</organism>
<reference key="1">
    <citation type="journal article" date="2007" name="PLoS Genet.">
        <title>Patterns and implications of gene gain and loss in the evolution of Prochlorococcus.</title>
        <authorList>
            <person name="Kettler G.C."/>
            <person name="Martiny A.C."/>
            <person name="Huang K."/>
            <person name="Zucker J."/>
            <person name="Coleman M.L."/>
            <person name="Rodrigue S."/>
            <person name="Chen F."/>
            <person name="Lapidus A."/>
            <person name="Ferriera S."/>
            <person name="Johnson J."/>
            <person name="Steglich C."/>
            <person name="Church G.M."/>
            <person name="Richardson P."/>
            <person name="Chisholm S.W."/>
        </authorList>
    </citation>
    <scope>NUCLEOTIDE SEQUENCE [LARGE SCALE GENOMIC DNA]</scope>
    <source>
        <strain>MIT 9303</strain>
    </source>
</reference>
<comment type="function">
    <text evidence="1">Binds directly to 16S ribosomal RNA.</text>
</comment>
<comment type="similarity">
    <text evidence="1">Belongs to the bacterial ribosomal protein bS20 family.</text>
</comment>
<gene>
    <name evidence="1" type="primary">rpsT</name>
    <name evidence="1" type="synonym">rps20</name>
    <name type="ordered locus">P9303_04341</name>
</gene>
<name>RS20_PROM3</name>
<proteinExistence type="inferred from homology"/>